<protein>
    <recommendedName>
        <fullName>Inositol phosphorylceramide synthase</fullName>
        <shortName>IPC synthase</shortName>
        <ecNumber>2.-.-.-</ecNumber>
    </recommendedName>
    <alternativeName>
        <fullName>Aureobasidin A resistance protein homolog</fullName>
    </alternativeName>
    <alternativeName>
        <fullName>Phosphatidylinositol:ceramide phosphoinositol transferase</fullName>
    </alternativeName>
</protein>
<comment type="function">
    <text evidence="4">Catalyzes the addition of a phosphorylinositol group onto ceramide to form inositol phosphorylceramide, an essential step in sphingolipid biosynthesis.</text>
</comment>
<comment type="activity regulation">
    <text evidence="4">Inhibited by aureobasidin A (AbA), khafrefungin and rustmicin.</text>
</comment>
<comment type="biophysicochemical properties">
    <kinetics>
        <KM evidence="4">130 uM for phosphatidylinositol</KM>
        <KM evidence="4">3.3 uM for C(6)-NBD-ceramide</KM>
        <Vmax evidence="4">1864.0 pmol/min/mg enzyme for phosphatidylinositol</Vmax>
        <Vmax evidence="4">884.0 pmol/min/mg enzyme for C(6)-NBD-ceramide</Vmax>
    </kinetics>
</comment>
<comment type="subcellular location">
    <subcellularLocation>
        <location evidence="1">Golgi apparatus</location>
        <location evidence="1">Golgi stack membrane</location>
        <topology evidence="1">Multi-pass membrane protein</topology>
    </subcellularLocation>
</comment>
<comment type="similarity">
    <text evidence="5">Belongs to the AUR1 family.</text>
</comment>
<dbReference type="EC" id="2.-.-.-"/>
<dbReference type="EMBL" id="AF013799">
    <property type="protein sequence ID" value="AAB67233.1"/>
    <property type="molecule type" value="Genomic_DNA"/>
</dbReference>
<dbReference type="EMBL" id="CP017627">
    <property type="protein sequence ID" value="AOW29559.1"/>
    <property type="molecule type" value="Genomic_DNA"/>
</dbReference>
<dbReference type="RefSeq" id="XP_715708.1">
    <property type="nucleotide sequence ID" value="XM_710615.2"/>
</dbReference>
<dbReference type="FunCoup" id="O13332">
    <property type="interactions" value="57"/>
</dbReference>
<dbReference type="STRING" id="237561.O13332"/>
<dbReference type="BindingDB" id="O13332"/>
<dbReference type="ChEMBL" id="CHEMBL1641343"/>
<dbReference type="DrugBank" id="DB14058">
    <property type="generic name" value="Basifungin"/>
</dbReference>
<dbReference type="GlyCosmos" id="O13332">
    <property type="glycosylation" value="3 sites, No reported glycans"/>
</dbReference>
<dbReference type="EnsemblFungi" id="C5_01240W_A-T">
    <property type="protein sequence ID" value="C5_01240W_A-T-p1"/>
    <property type="gene ID" value="C5_01240W_A"/>
</dbReference>
<dbReference type="GeneID" id="3642617"/>
<dbReference type="KEGG" id="cal:CAALFM_C501240WA"/>
<dbReference type="CGD" id="CAL0000178882">
    <property type="gene designation" value="AUR1"/>
</dbReference>
<dbReference type="VEuPathDB" id="FungiDB:C5_01240W_A"/>
<dbReference type="eggNOG" id="ENOG502QPQM">
    <property type="taxonomic scope" value="Eukaryota"/>
</dbReference>
<dbReference type="HOGENOM" id="CLU_030747_2_0_1"/>
<dbReference type="InParanoid" id="O13332"/>
<dbReference type="OMA" id="WSIYDAQ"/>
<dbReference type="OrthoDB" id="5784at2759"/>
<dbReference type="BRENDA" id="2.7.1.227">
    <property type="organism ID" value="1096"/>
</dbReference>
<dbReference type="SABIO-RK" id="O13332"/>
<dbReference type="PRO" id="PR:O13332"/>
<dbReference type="Proteomes" id="UP000000559">
    <property type="component" value="Chromosome 5"/>
</dbReference>
<dbReference type="GO" id="GO:0032580">
    <property type="term" value="C:Golgi cisterna membrane"/>
    <property type="evidence" value="ECO:0007669"/>
    <property type="project" value="UniProtKB-SubCell"/>
</dbReference>
<dbReference type="GO" id="GO:0070916">
    <property type="term" value="C:inositol phosphoceramide synthase complex"/>
    <property type="evidence" value="ECO:0000318"/>
    <property type="project" value="GO_Central"/>
</dbReference>
<dbReference type="GO" id="GO:0045140">
    <property type="term" value="F:inositol phosphoceramide synthase activity"/>
    <property type="evidence" value="ECO:0000250"/>
    <property type="project" value="CGD"/>
</dbReference>
<dbReference type="GO" id="GO:0006676">
    <property type="term" value="P:mannosyl diphosphorylinositol ceramide metabolic process"/>
    <property type="evidence" value="ECO:0000318"/>
    <property type="project" value="GO_Central"/>
</dbReference>
<dbReference type="GO" id="GO:0030148">
    <property type="term" value="P:sphingolipid biosynthetic process"/>
    <property type="evidence" value="ECO:0000318"/>
    <property type="project" value="GO_Central"/>
</dbReference>
<dbReference type="GO" id="GO:0006665">
    <property type="term" value="P:sphingolipid metabolic process"/>
    <property type="evidence" value="ECO:0000250"/>
    <property type="project" value="CGD"/>
</dbReference>
<dbReference type="CDD" id="cd03386">
    <property type="entry name" value="PAP2_Aur1_like"/>
    <property type="match status" value="1"/>
</dbReference>
<dbReference type="Gene3D" id="1.20.144.10">
    <property type="entry name" value="Phosphatidic acid phosphatase type 2/haloperoxidase"/>
    <property type="match status" value="1"/>
</dbReference>
<dbReference type="InterPro" id="IPR026841">
    <property type="entry name" value="Aur1/Ipt1"/>
</dbReference>
<dbReference type="InterPro" id="IPR052185">
    <property type="entry name" value="IPC_Synthase-Related"/>
</dbReference>
<dbReference type="InterPro" id="IPR000326">
    <property type="entry name" value="P_Acid_Pase_2/haloperoxidase"/>
</dbReference>
<dbReference type="PANTHER" id="PTHR31310">
    <property type="match status" value="1"/>
</dbReference>
<dbReference type="PANTHER" id="PTHR31310:SF11">
    <property type="entry name" value="INOSITOL PHOSPHORYLCERAMIDE SYNTHASE CATALYTIC SUBUNIT AUR1"/>
    <property type="match status" value="1"/>
</dbReference>
<dbReference type="Pfam" id="PF14378">
    <property type="entry name" value="PAP2_3"/>
    <property type="match status" value="1"/>
</dbReference>
<dbReference type="SMART" id="SM00014">
    <property type="entry name" value="acidPPc"/>
    <property type="match status" value="1"/>
</dbReference>
<sequence>MASSILRSKIIQKPYQLFHYYFLSEKAPGSTVSDLNFDTNIQTSLRKLKHHHWTVGEIFHYGFLVSILFFVFVVFPASFFIKLPIILAFATCFLIPLTSQFFLPALPVFTWLALYFTCAKIPQEWKPAITVKVLPAMETILYGDNLSNVLATITTGVLDILAWLPYGIIHFSFPFVLAAIIFLFGPPTALRSFGFAFGYMNLLGVLIQMAFPAAPPWYKNLHGLEPANYSMHGSPGGLGRIDKLLGVDMYTTGFSNSSIIFGAFPSLHSGCCIMEVLFLCWLFPRFKFVWVTYASWLWWSTMYLTHHYFVDLIGGAMLSLTVFEFTKYKYLPKNKEGLFCRWSYTEIEKIDIQEIDPLSYNYIPINSNDNESRLYTRVYQESQVSPPSRAETPEAFEMSNFSRSRQSSKTQVPLSNLTNNDQVPGINEEDEEEEGDEISSSTPSVFEDEPQGSTYAASSATSVDDLDSKRN</sequence>
<proteinExistence type="evidence at protein level"/>
<reference key="1">
    <citation type="submission" date="1997-08" db="EMBL/GenBank/DDBJ databases">
        <title>Cloning of AUR1 homolog on Candida albicans.</title>
        <authorList>
            <person name="Kondo A."/>
            <person name="Hashida-Okado T."/>
            <person name="Takesako K."/>
            <person name="Kato I."/>
        </authorList>
    </citation>
    <scope>NUCLEOTIDE SEQUENCE [GENOMIC DNA]</scope>
    <source>
        <strain>TIMM 0136</strain>
    </source>
</reference>
<reference key="2">
    <citation type="journal article" date="2004" name="Proc. Natl. Acad. Sci. U.S.A.">
        <title>The diploid genome sequence of Candida albicans.</title>
        <authorList>
            <person name="Jones T."/>
            <person name="Federspiel N.A."/>
            <person name="Chibana H."/>
            <person name="Dungan J."/>
            <person name="Kalman S."/>
            <person name="Magee B.B."/>
            <person name="Newport G."/>
            <person name="Thorstenson Y.R."/>
            <person name="Agabian N."/>
            <person name="Magee P.T."/>
            <person name="Davis R.W."/>
            <person name="Scherer S."/>
        </authorList>
    </citation>
    <scope>NUCLEOTIDE SEQUENCE [LARGE SCALE GENOMIC DNA]</scope>
    <source>
        <strain>SC5314 / ATCC MYA-2876</strain>
    </source>
</reference>
<reference key="3">
    <citation type="journal article" date="2007" name="Genome Biol.">
        <title>Assembly of the Candida albicans genome into sixteen supercontigs aligned on the eight chromosomes.</title>
        <authorList>
            <person name="van het Hoog M."/>
            <person name="Rast T.J."/>
            <person name="Martchenko M."/>
            <person name="Grindle S."/>
            <person name="Dignard D."/>
            <person name="Hogues H."/>
            <person name="Cuomo C."/>
            <person name="Berriman M."/>
            <person name="Scherer S."/>
            <person name="Magee B.B."/>
            <person name="Whiteway M."/>
            <person name="Chibana H."/>
            <person name="Nantel A."/>
            <person name="Magee P.T."/>
        </authorList>
    </citation>
    <scope>GENOME REANNOTATION</scope>
    <source>
        <strain>SC5314 / ATCC MYA-2876</strain>
    </source>
</reference>
<reference key="4">
    <citation type="journal article" date="2013" name="Genome Biol.">
        <title>Assembly of a phased diploid Candida albicans genome facilitates allele-specific measurements and provides a simple model for repeat and indel structure.</title>
        <authorList>
            <person name="Muzzey D."/>
            <person name="Schwartz K."/>
            <person name="Weissman J.S."/>
            <person name="Sherlock G."/>
        </authorList>
    </citation>
    <scope>NUCLEOTIDE SEQUENCE [LARGE SCALE GENOMIC DNA]</scope>
    <scope>GENOME REANNOTATION</scope>
    <source>
        <strain>SC5314 / ATCC MYA-2876</strain>
    </source>
</reference>
<reference key="5">
    <citation type="journal article" date="2009" name="Antimicrob. Agents Chemother.">
        <title>Inhibition of inositol phosphorylceramide synthase by the cyclic peptide aureobasidin A.</title>
        <authorList>
            <person name="Aeed P.A."/>
            <person name="Young C.L."/>
            <person name="Nagiec M.M."/>
            <person name="Elhammer A.P."/>
        </authorList>
    </citation>
    <scope>FUNCTION</scope>
    <scope>BIOPHYSICOCHEMICAL PROPERTIES</scope>
    <scope>ACTIVITY REGULATION</scope>
</reference>
<name>AUR1_CANAL</name>
<gene>
    <name type="primary">AUR1</name>
    <name type="ordered locus">CAALFM_C501240WA</name>
    <name type="ORF">CaO19.1945</name>
    <name type="ORF">CaO19.9500</name>
</gene>
<evidence type="ECO:0000250" key="1"/>
<evidence type="ECO:0000255" key="2"/>
<evidence type="ECO:0000256" key="3">
    <source>
        <dbReference type="SAM" id="MobiDB-lite"/>
    </source>
</evidence>
<evidence type="ECO:0000269" key="4">
    <source>
    </source>
</evidence>
<evidence type="ECO:0000305" key="5"/>
<keyword id="KW-0325">Glycoprotein</keyword>
<keyword id="KW-0333">Golgi apparatus</keyword>
<keyword id="KW-0443">Lipid metabolism</keyword>
<keyword id="KW-0472">Membrane</keyword>
<keyword id="KW-1185">Reference proteome</keyword>
<keyword id="KW-0746">Sphingolipid metabolism</keyword>
<keyword id="KW-0808">Transferase</keyword>
<keyword id="KW-0812">Transmembrane</keyword>
<keyword id="KW-1133">Transmembrane helix</keyword>
<feature type="chain" id="PRO_0000064764" description="Inositol phosphorylceramide synthase">
    <location>
        <begin position="1"/>
        <end position="471"/>
    </location>
</feature>
<feature type="topological domain" description="Cytoplasmic" evidence="1">
    <location>
        <begin position="1"/>
        <end position="54"/>
    </location>
</feature>
<feature type="transmembrane region" description="Helical" evidence="2">
    <location>
        <begin position="55"/>
        <end position="75"/>
    </location>
</feature>
<feature type="topological domain" description="Lumenal" evidence="1">
    <location>
        <begin position="76"/>
        <end position="77"/>
    </location>
</feature>
<feature type="transmembrane region" description="Helical" evidence="2">
    <location>
        <begin position="78"/>
        <end position="98"/>
    </location>
</feature>
<feature type="topological domain" description="Cytoplasmic" evidence="1">
    <location>
        <begin position="99"/>
        <end position="100"/>
    </location>
</feature>
<feature type="transmembrane region" description="Helical" evidence="2">
    <location>
        <begin position="101"/>
        <end position="121"/>
    </location>
</feature>
<feature type="topological domain" description="Lumenal" evidence="1">
    <location>
        <begin position="122"/>
        <end position="168"/>
    </location>
</feature>
<feature type="transmembrane region" description="Helical" evidence="2">
    <location>
        <begin position="169"/>
        <end position="189"/>
    </location>
</feature>
<feature type="topological domain" description="Cytoplasmic" evidence="1">
    <location>
        <begin position="190"/>
        <end position="191"/>
    </location>
</feature>
<feature type="transmembrane region" description="Helical" evidence="2">
    <location>
        <begin position="192"/>
        <end position="212"/>
    </location>
</feature>
<feature type="topological domain" description="Lumenal" evidence="1">
    <location>
        <begin position="213"/>
        <end position="258"/>
    </location>
</feature>
<feature type="transmembrane region" description="Helical" evidence="2">
    <location>
        <begin position="259"/>
        <end position="279"/>
    </location>
</feature>
<feature type="topological domain" description="Cytoplasmic" evidence="1">
    <location>
        <begin position="280"/>
        <end position="281"/>
    </location>
</feature>
<feature type="transmembrane region" description="Helical" evidence="2">
    <location>
        <begin position="282"/>
        <end position="302"/>
    </location>
</feature>
<feature type="topological domain" description="Lumenal" evidence="1">
    <location>
        <begin position="303"/>
        <end position="304"/>
    </location>
</feature>
<feature type="transmembrane region" description="Helical" evidence="2">
    <location>
        <begin position="305"/>
        <end position="325"/>
    </location>
</feature>
<feature type="topological domain" description="Cytoplasmic" evidence="1">
    <location>
        <begin position="326"/>
        <end position="471"/>
    </location>
</feature>
<feature type="region of interest" description="Disordered" evidence="3">
    <location>
        <begin position="398"/>
        <end position="471"/>
    </location>
</feature>
<feature type="compositionally biased region" description="Polar residues" evidence="3">
    <location>
        <begin position="399"/>
        <end position="422"/>
    </location>
</feature>
<feature type="compositionally biased region" description="Acidic residues" evidence="3">
    <location>
        <begin position="427"/>
        <end position="437"/>
    </location>
</feature>
<feature type="compositionally biased region" description="Polar residues" evidence="3">
    <location>
        <begin position="451"/>
        <end position="462"/>
    </location>
</feature>
<feature type="glycosylation site" description="N-linked (GlcNAc...) asparagine" evidence="2">
    <location>
        <position position="145"/>
    </location>
</feature>
<feature type="glycosylation site" description="N-linked (GlcNAc...) asparagine" evidence="2">
    <location>
        <position position="228"/>
    </location>
</feature>
<feature type="glycosylation site" description="N-linked (GlcNAc...) asparagine" evidence="2">
    <location>
        <position position="256"/>
    </location>
</feature>
<feature type="sequence conflict" description="In Ref. 1; AAB67233." evidence="5" ref="1">
    <original>I</original>
    <variation>V</variation>
    <location>
        <position position="365"/>
    </location>
</feature>
<feature type="sequence conflict" description="In Ref. 1; AAB67233." evidence="5" ref="1">
    <original>S</original>
    <variation>Q</variation>
    <location>
        <position position="388"/>
    </location>
</feature>
<feature type="sequence conflict" description="In Ref. 1; AAB67233." evidence="5" ref="1">
    <original>P</original>
    <variation>S</variation>
    <location>
        <position position="424"/>
    </location>
</feature>
<organism>
    <name type="scientific">Candida albicans (strain SC5314 / ATCC MYA-2876)</name>
    <name type="common">Yeast</name>
    <dbReference type="NCBI Taxonomy" id="237561"/>
    <lineage>
        <taxon>Eukaryota</taxon>
        <taxon>Fungi</taxon>
        <taxon>Dikarya</taxon>
        <taxon>Ascomycota</taxon>
        <taxon>Saccharomycotina</taxon>
        <taxon>Pichiomycetes</taxon>
        <taxon>Debaryomycetaceae</taxon>
        <taxon>Candida/Lodderomyces clade</taxon>
        <taxon>Candida</taxon>
    </lineage>
</organism>
<accession>O13332</accession>
<accession>A0A1D8PN38</accession>
<accession>Q5A1Q1</accession>